<gene>
    <name evidence="1" type="primary">ruvB</name>
    <name type="ordered locus">CKR_2782</name>
</gene>
<dbReference type="EC" id="3.6.4.-" evidence="1"/>
<dbReference type="EMBL" id="AP009049">
    <property type="protein sequence ID" value="BAH07833.1"/>
    <property type="molecule type" value="Genomic_DNA"/>
</dbReference>
<dbReference type="RefSeq" id="WP_012103487.1">
    <property type="nucleotide sequence ID" value="NC_011837.1"/>
</dbReference>
<dbReference type="SMR" id="B9E5Q8"/>
<dbReference type="KEGG" id="ckr:CKR_2782"/>
<dbReference type="HOGENOM" id="CLU_055599_1_0_9"/>
<dbReference type="Proteomes" id="UP000007969">
    <property type="component" value="Chromosome"/>
</dbReference>
<dbReference type="GO" id="GO:0005737">
    <property type="term" value="C:cytoplasm"/>
    <property type="evidence" value="ECO:0007669"/>
    <property type="project" value="UniProtKB-SubCell"/>
</dbReference>
<dbReference type="GO" id="GO:0048476">
    <property type="term" value="C:Holliday junction resolvase complex"/>
    <property type="evidence" value="ECO:0007669"/>
    <property type="project" value="UniProtKB-UniRule"/>
</dbReference>
<dbReference type="GO" id="GO:0005524">
    <property type="term" value="F:ATP binding"/>
    <property type="evidence" value="ECO:0007669"/>
    <property type="project" value="UniProtKB-UniRule"/>
</dbReference>
<dbReference type="GO" id="GO:0016887">
    <property type="term" value="F:ATP hydrolysis activity"/>
    <property type="evidence" value="ECO:0007669"/>
    <property type="project" value="InterPro"/>
</dbReference>
<dbReference type="GO" id="GO:0000400">
    <property type="term" value="F:four-way junction DNA binding"/>
    <property type="evidence" value="ECO:0007669"/>
    <property type="project" value="UniProtKB-UniRule"/>
</dbReference>
<dbReference type="GO" id="GO:0009378">
    <property type="term" value="F:four-way junction helicase activity"/>
    <property type="evidence" value="ECO:0007669"/>
    <property type="project" value="InterPro"/>
</dbReference>
<dbReference type="GO" id="GO:0006310">
    <property type="term" value="P:DNA recombination"/>
    <property type="evidence" value="ECO:0007669"/>
    <property type="project" value="UniProtKB-UniRule"/>
</dbReference>
<dbReference type="GO" id="GO:0006281">
    <property type="term" value="P:DNA repair"/>
    <property type="evidence" value="ECO:0007669"/>
    <property type="project" value="UniProtKB-UniRule"/>
</dbReference>
<dbReference type="CDD" id="cd00009">
    <property type="entry name" value="AAA"/>
    <property type="match status" value="1"/>
</dbReference>
<dbReference type="Gene3D" id="1.10.8.60">
    <property type="match status" value="1"/>
</dbReference>
<dbReference type="Gene3D" id="3.40.50.300">
    <property type="entry name" value="P-loop containing nucleotide triphosphate hydrolases"/>
    <property type="match status" value="1"/>
</dbReference>
<dbReference type="Gene3D" id="1.10.10.10">
    <property type="entry name" value="Winged helix-like DNA-binding domain superfamily/Winged helix DNA-binding domain"/>
    <property type="match status" value="1"/>
</dbReference>
<dbReference type="HAMAP" id="MF_00016">
    <property type="entry name" value="DNA_HJ_migration_RuvB"/>
    <property type="match status" value="1"/>
</dbReference>
<dbReference type="InterPro" id="IPR003593">
    <property type="entry name" value="AAA+_ATPase"/>
</dbReference>
<dbReference type="InterPro" id="IPR041445">
    <property type="entry name" value="AAA_lid_4"/>
</dbReference>
<dbReference type="InterPro" id="IPR004605">
    <property type="entry name" value="DNA_helicase_Holl-junc_RuvB"/>
</dbReference>
<dbReference type="InterPro" id="IPR027417">
    <property type="entry name" value="P-loop_NTPase"/>
</dbReference>
<dbReference type="InterPro" id="IPR008824">
    <property type="entry name" value="RuvB-like_N"/>
</dbReference>
<dbReference type="InterPro" id="IPR008823">
    <property type="entry name" value="RuvB_C"/>
</dbReference>
<dbReference type="InterPro" id="IPR036388">
    <property type="entry name" value="WH-like_DNA-bd_sf"/>
</dbReference>
<dbReference type="InterPro" id="IPR036390">
    <property type="entry name" value="WH_DNA-bd_sf"/>
</dbReference>
<dbReference type="NCBIfam" id="NF000868">
    <property type="entry name" value="PRK00080.1"/>
    <property type="match status" value="1"/>
</dbReference>
<dbReference type="NCBIfam" id="TIGR00635">
    <property type="entry name" value="ruvB"/>
    <property type="match status" value="1"/>
</dbReference>
<dbReference type="PANTHER" id="PTHR42848">
    <property type="match status" value="1"/>
</dbReference>
<dbReference type="PANTHER" id="PTHR42848:SF1">
    <property type="entry name" value="HOLLIDAY JUNCTION BRANCH MIGRATION COMPLEX SUBUNIT RUVB"/>
    <property type="match status" value="1"/>
</dbReference>
<dbReference type="Pfam" id="PF17864">
    <property type="entry name" value="AAA_lid_4"/>
    <property type="match status" value="1"/>
</dbReference>
<dbReference type="Pfam" id="PF05491">
    <property type="entry name" value="RuvB_C"/>
    <property type="match status" value="1"/>
</dbReference>
<dbReference type="Pfam" id="PF05496">
    <property type="entry name" value="RuvB_N"/>
    <property type="match status" value="1"/>
</dbReference>
<dbReference type="SMART" id="SM00382">
    <property type="entry name" value="AAA"/>
    <property type="match status" value="1"/>
</dbReference>
<dbReference type="SUPFAM" id="SSF52540">
    <property type="entry name" value="P-loop containing nucleoside triphosphate hydrolases"/>
    <property type="match status" value="1"/>
</dbReference>
<dbReference type="SUPFAM" id="SSF46785">
    <property type="entry name" value="Winged helix' DNA-binding domain"/>
    <property type="match status" value="1"/>
</dbReference>
<evidence type="ECO:0000255" key="1">
    <source>
        <dbReference type="HAMAP-Rule" id="MF_00016"/>
    </source>
</evidence>
<protein>
    <recommendedName>
        <fullName evidence="1">Holliday junction branch migration complex subunit RuvB</fullName>
        <ecNumber evidence="1">3.6.4.-</ecNumber>
    </recommendedName>
</protein>
<proteinExistence type="inferred from homology"/>
<accession>B9E5Q8</accession>
<sequence>MEDRIVTPLNIRGDAESEYSLRPKSLKEYIGQRKVKEKLKIFIEAAKNRKEALDHVLFYGPPGLGKTTLANIIALEMGGNLKITSGPAIERAGDLAAILTGLDDRDVLFIDEIHRLNRSVEEILYPAMEDYALDIVIGKGASTKSIRLDLPRFTLIGATTRVGLLTAPLRDRFGVLCPMDFYDQEELSEIVVRSCNILKIRIEPEASVEIGKRSRGTPRIANRLLKRVRDYSEVKGNGTIDLKTSKAALELLEVDKEGFDSIDNKILRAIIDNFNGGPVGIETLAYFIGEELDTIEDVYEPYLLQKGFIIRTPRGRIASDSAYKHFNKTRKSSNAYHKNLKQSSLFDGEV</sequence>
<keyword id="KW-0067">ATP-binding</keyword>
<keyword id="KW-0963">Cytoplasm</keyword>
<keyword id="KW-0227">DNA damage</keyword>
<keyword id="KW-0233">DNA recombination</keyword>
<keyword id="KW-0234">DNA repair</keyword>
<keyword id="KW-0238">DNA-binding</keyword>
<keyword id="KW-0378">Hydrolase</keyword>
<keyword id="KW-0547">Nucleotide-binding</keyword>
<reference key="1">
    <citation type="submission" date="2005-09" db="EMBL/GenBank/DDBJ databases">
        <title>Complete genome sequence of Clostridium kluyveri and comparative genomics of Clostridia species.</title>
        <authorList>
            <person name="Inui M."/>
            <person name="Nonaka H."/>
            <person name="Shinoda Y."/>
            <person name="Ikenaga Y."/>
            <person name="Abe M."/>
            <person name="Naito K."/>
            <person name="Vertes A.A."/>
            <person name="Yukawa H."/>
        </authorList>
    </citation>
    <scope>NUCLEOTIDE SEQUENCE [LARGE SCALE GENOMIC DNA]</scope>
    <source>
        <strain>NBRC 12016</strain>
    </source>
</reference>
<comment type="function">
    <text evidence="1">The RuvA-RuvB-RuvC complex processes Holliday junction (HJ) DNA during genetic recombination and DNA repair, while the RuvA-RuvB complex plays an important role in the rescue of blocked DNA replication forks via replication fork reversal (RFR). RuvA specifically binds to HJ cruciform DNA, conferring on it an open structure. The RuvB hexamer acts as an ATP-dependent pump, pulling dsDNA into and through the RuvAB complex. RuvB forms 2 homohexamers on either side of HJ DNA bound by 1 or 2 RuvA tetramers; 4 subunits per hexamer contact DNA at a time. Coordinated motions by a converter formed by DNA-disengaged RuvB subunits stimulates ATP hydrolysis and nucleotide exchange. Immobilization of the converter enables RuvB to convert the ATP-contained energy into a lever motion, pulling 2 nucleotides of DNA out of the RuvA tetramer per ATP hydrolyzed, thus driving DNA branch migration. The RuvB motors rotate together with the DNA substrate, which together with the progressing nucleotide cycle form the mechanistic basis for DNA recombination by continuous HJ branch migration. Branch migration allows RuvC to scan DNA until it finds its consensus sequence, where it cleaves and resolves cruciform DNA.</text>
</comment>
<comment type="catalytic activity">
    <reaction evidence="1">
        <text>ATP + H2O = ADP + phosphate + H(+)</text>
        <dbReference type="Rhea" id="RHEA:13065"/>
        <dbReference type="ChEBI" id="CHEBI:15377"/>
        <dbReference type="ChEBI" id="CHEBI:15378"/>
        <dbReference type="ChEBI" id="CHEBI:30616"/>
        <dbReference type="ChEBI" id="CHEBI:43474"/>
        <dbReference type="ChEBI" id="CHEBI:456216"/>
    </reaction>
</comment>
<comment type="subunit">
    <text evidence="1">Homohexamer. Forms an RuvA(8)-RuvB(12)-Holliday junction (HJ) complex. HJ DNA is sandwiched between 2 RuvA tetramers; dsDNA enters through RuvA and exits via RuvB. An RuvB hexamer assembles on each DNA strand where it exits the tetramer. Each RuvB hexamer is contacted by two RuvA subunits (via domain III) on 2 adjacent RuvB subunits; this complex drives branch migration. In the full resolvosome a probable DNA-RuvA(4)-RuvB(12)-RuvC(2) complex forms which resolves the HJ.</text>
</comment>
<comment type="subcellular location">
    <subcellularLocation>
        <location evidence="1">Cytoplasm</location>
    </subcellularLocation>
</comment>
<comment type="domain">
    <text evidence="1">Has 3 domains, the large (RuvB-L) and small ATPase (RuvB-S) domains and the C-terminal head (RuvB-H) domain. The head domain binds DNA, while the ATPase domains jointly bind ATP, ADP or are empty depending on the state of the subunit in the translocation cycle. During a single DNA translocation step the structure of each domain remains the same, but their relative positions change.</text>
</comment>
<comment type="similarity">
    <text evidence="1">Belongs to the RuvB family.</text>
</comment>
<feature type="chain" id="PRO_1000195213" description="Holliday junction branch migration complex subunit RuvB">
    <location>
        <begin position="1"/>
        <end position="350"/>
    </location>
</feature>
<feature type="region of interest" description="Large ATPase domain (RuvB-L)" evidence="1">
    <location>
        <begin position="1"/>
        <end position="182"/>
    </location>
</feature>
<feature type="region of interest" description="Small ATPAse domain (RuvB-S)" evidence="1">
    <location>
        <begin position="183"/>
        <end position="253"/>
    </location>
</feature>
<feature type="region of interest" description="Head domain (RuvB-H)" evidence="1">
    <location>
        <begin position="256"/>
        <end position="350"/>
    </location>
</feature>
<feature type="binding site" evidence="1">
    <location>
        <position position="21"/>
    </location>
    <ligand>
        <name>ATP</name>
        <dbReference type="ChEBI" id="CHEBI:30616"/>
    </ligand>
</feature>
<feature type="binding site" evidence="1">
    <location>
        <position position="22"/>
    </location>
    <ligand>
        <name>ATP</name>
        <dbReference type="ChEBI" id="CHEBI:30616"/>
    </ligand>
</feature>
<feature type="binding site" evidence="1">
    <location>
        <position position="63"/>
    </location>
    <ligand>
        <name>ATP</name>
        <dbReference type="ChEBI" id="CHEBI:30616"/>
    </ligand>
</feature>
<feature type="binding site" evidence="1">
    <location>
        <position position="66"/>
    </location>
    <ligand>
        <name>ATP</name>
        <dbReference type="ChEBI" id="CHEBI:30616"/>
    </ligand>
</feature>
<feature type="binding site" evidence="1">
    <location>
        <position position="67"/>
    </location>
    <ligand>
        <name>ATP</name>
        <dbReference type="ChEBI" id="CHEBI:30616"/>
    </ligand>
</feature>
<feature type="binding site" evidence="1">
    <location>
        <position position="67"/>
    </location>
    <ligand>
        <name>Mg(2+)</name>
        <dbReference type="ChEBI" id="CHEBI:18420"/>
    </ligand>
</feature>
<feature type="binding site" evidence="1">
    <location>
        <position position="68"/>
    </location>
    <ligand>
        <name>ATP</name>
        <dbReference type="ChEBI" id="CHEBI:30616"/>
    </ligand>
</feature>
<feature type="binding site" evidence="1">
    <location>
        <begin position="129"/>
        <end position="131"/>
    </location>
    <ligand>
        <name>ATP</name>
        <dbReference type="ChEBI" id="CHEBI:30616"/>
    </ligand>
</feature>
<feature type="binding site" evidence="1">
    <location>
        <position position="172"/>
    </location>
    <ligand>
        <name>ATP</name>
        <dbReference type="ChEBI" id="CHEBI:30616"/>
    </ligand>
</feature>
<feature type="binding site" evidence="1">
    <location>
        <position position="182"/>
    </location>
    <ligand>
        <name>ATP</name>
        <dbReference type="ChEBI" id="CHEBI:30616"/>
    </ligand>
</feature>
<feature type="binding site" evidence="1">
    <location>
        <position position="219"/>
    </location>
    <ligand>
        <name>ATP</name>
        <dbReference type="ChEBI" id="CHEBI:30616"/>
    </ligand>
</feature>
<feature type="binding site" evidence="1">
    <location>
        <position position="311"/>
    </location>
    <ligand>
        <name>DNA</name>
        <dbReference type="ChEBI" id="CHEBI:16991"/>
    </ligand>
</feature>
<feature type="binding site" evidence="1">
    <location>
        <position position="316"/>
    </location>
    <ligand>
        <name>DNA</name>
        <dbReference type="ChEBI" id="CHEBI:16991"/>
    </ligand>
</feature>
<name>RUVB_CLOK1</name>
<organism>
    <name type="scientific">Clostridium kluyveri (strain NBRC 12016)</name>
    <dbReference type="NCBI Taxonomy" id="583346"/>
    <lineage>
        <taxon>Bacteria</taxon>
        <taxon>Bacillati</taxon>
        <taxon>Bacillota</taxon>
        <taxon>Clostridia</taxon>
        <taxon>Eubacteriales</taxon>
        <taxon>Clostridiaceae</taxon>
        <taxon>Clostridium</taxon>
    </lineage>
</organism>